<sequence>MAQIKITLTKSPIGRKPEQRKTVKALGLGKLNSSVIKEDNAAMRGMVTAISHLVTVEEVK</sequence>
<keyword id="KW-1185">Reference proteome</keyword>
<keyword id="KW-0687">Ribonucleoprotein</keyword>
<keyword id="KW-0689">Ribosomal protein</keyword>
<accession>B9DSW8</accession>
<name>RL30_STRU0</name>
<evidence type="ECO:0000255" key="1">
    <source>
        <dbReference type="HAMAP-Rule" id="MF_01371"/>
    </source>
</evidence>
<evidence type="ECO:0000305" key="2"/>
<dbReference type="EMBL" id="AM946015">
    <property type="protein sequence ID" value="CAR40470.1"/>
    <property type="molecule type" value="Genomic_DNA"/>
</dbReference>
<dbReference type="RefSeq" id="WP_012657647.1">
    <property type="nucleotide sequence ID" value="NC_012004.1"/>
</dbReference>
<dbReference type="SMR" id="B9DSW8"/>
<dbReference type="STRING" id="218495.SUB0086"/>
<dbReference type="GeneID" id="93825312"/>
<dbReference type="KEGG" id="sub:SUB0086"/>
<dbReference type="eggNOG" id="COG1841">
    <property type="taxonomic scope" value="Bacteria"/>
</dbReference>
<dbReference type="HOGENOM" id="CLU_131047_2_1_9"/>
<dbReference type="OrthoDB" id="9812790at2"/>
<dbReference type="Proteomes" id="UP000000449">
    <property type="component" value="Chromosome"/>
</dbReference>
<dbReference type="GO" id="GO:0022625">
    <property type="term" value="C:cytosolic large ribosomal subunit"/>
    <property type="evidence" value="ECO:0007669"/>
    <property type="project" value="TreeGrafter"/>
</dbReference>
<dbReference type="GO" id="GO:0003735">
    <property type="term" value="F:structural constituent of ribosome"/>
    <property type="evidence" value="ECO:0007669"/>
    <property type="project" value="InterPro"/>
</dbReference>
<dbReference type="GO" id="GO:0006412">
    <property type="term" value="P:translation"/>
    <property type="evidence" value="ECO:0007669"/>
    <property type="project" value="UniProtKB-UniRule"/>
</dbReference>
<dbReference type="CDD" id="cd01658">
    <property type="entry name" value="Ribosomal_L30"/>
    <property type="match status" value="1"/>
</dbReference>
<dbReference type="FunFam" id="3.30.1390.20:FF:000001">
    <property type="entry name" value="50S ribosomal protein L30"/>
    <property type="match status" value="1"/>
</dbReference>
<dbReference type="Gene3D" id="3.30.1390.20">
    <property type="entry name" value="Ribosomal protein L30, ferredoxin-like fold domain"/>
    <property type="match status" value="1"/>
</dbReference>
<dbReference type="HAMAP" id="MF_01371_B">
    <property type="entry name" value="Ribosomal_uL30_B"/>
    <property type="match status" value="1"/>
</dbReference>
<dbReference type="InterPro" id="IPR036919">
    <property type="entry name" value="Ribo_uL30_ferredoxin-like_sf"/>
</dbReference>
<dbReference type="InterPro" id="IPR005996">
    <property type="entry name" value="Ribosomal_uL30_bac-type"/>
</dbReference>
<dbReference type="InterPro" id="IPR018038">
    <property type="entry name" value="Ribosomal_uL30_CS"/>
</dbReference>
<dbReference type="InterPro" id="IPR016082">
    <property type="entry name" value="Ribosomal_uL30_ferredoxin-like"/>
</dbReference>
<dbReference type="NCBIfam" id="TIGR01308">
    <property type="entry name" value="rpmD_bact"/>
    <property type="match status" value="1"/>
</dbReference>
<dbReference type="PANTHER" id="PTHR15892:SF2">
    <property type="entry name" value="LARGE RIBOSOMAL SUBUNIT PROTEIN UL30M"/>
    <property type="match status" value="1"/>
</dbReference>
<dbReference type="PANTHER" id="PTHR15892">
    <property type="entry name" value="MITOCHONDRIAL RIBOSOMAL PROTEIN L30"/>
    <property type="match status" value="1"/>
</dbReference>
<dbReference type="Pfam" id="PF00327">
    <property type="entry name" value="Ribosomal_L30"/>
    <property type="match status" value="1"/>
</dbReference>
<dbReference type="PIRSF" id="PIRSF002211">
    <property type="entry name" value="Ribosomal_L30_bac-type"/>
    <property type="match status" value="1"/>
</dbReference>
<dbReference type="SUPFAM" id="SSF55129">
    <property type="entry name" value="Ribosomal protein L30p/L7e"/>
    <property type="match status" value="1"/>
</dbReference>
<dbReference type="PROSITE" id="PS00634">
    <property type="entry name" value="RIBOSOMAL_L30"/>
    <property type="match status" value="1"/>
</dbReference>
<protein>
    <recommendedName>
        <fullName evidence="1">Large ribosomal subunit protein uL30</fullName>
    </recommendedName>
    <alternativeName>
        <fullName evidence="2">50S ribosomal protein L30</fullName>
    </alternativeName>
</protein>
<proteinExistence type="inferred from homology"/>
<organism>
    <name type="scientific">Streptococcus uberis (strain ATCC BAA-854 / 0140J)</name>
    <dbReference type="NCBI Taxonomy" id="218495"/>
    <lineage>
        <taxon>Bacteria</taxon>
        <taxon>Bacillati</taxon>
        <taxon>Bacillota</taxon>
        <taxon>Bacilli</taxon>
        <taxon>Lactobacillales</taxon>
        <taxon>Streptococcaceae</taxon>
        <taxon>Streptococcus</taxon>
    </lineage>
</organism>
<reference key="1">
    <citation type="journal article" date="2009" name="BMC Genomics">
        <title>Evidence for niche adaptation in the genome of the bovine pathogen Streptococcus uberis.</title>
        <authorList>
            <person name="Ward P.N."/>
            <person name="Holden M.T.G."/>
            <person name="Leigh J.A."/>
            <person name="Lennard N."/>
            <person name="Bignell A."/>
            <person name="Barron A."/>
            <person name="Clark L."/>
            <person name="Quail M.A."/>
            <person name="Woodward J."/>
            <person name="Barrell B.G."/>
            <person name="Egan S.A."/>
            <person name="Field T.R."/>
            <person name="Maskell D."/>
            <person name="Kehoe M."/>
            <person name="Dowson C.G."/>
            <person name="Chanter N."/>
            <person name="Whatmore A.M."/>
            <person name="Bentley S.D."/>
            <person name="Parkhill J."/>
        </authorList>
    </citation>
    <scope>NUCLEOTIDE SEQUENCE [LARGE SCALE GENOMIC DNA]</scope>
    <source>
        <strain>ATCC BAA-854 / 0140J</strain>
    </source>
</reference>
<feature type="chain" id="PRO_1000184163" description="Large ribosomal subunit protein uL30">
    <location>
        <begin position="1"/>
        <end position="60"/>
    </location>
</feature>
<comment type="subunit">
    <text evidence="1">Part of the 50S ribosomal subunit.</text>
</comment>
<comment type="similarity">
    <text evidence="1">Belongs to the universal ribosomal protein uL30 family.</text>
</comment>
<gene>
    <name evidence="1" type="primary">rpmD</name>
    <name type="ordered locus">SUB0086</name>
</gene>